<organism>
    <name type="scientific">Mycobacterium tuberculosis (strain ATCC 25618 / H37Rv)</name>
    <dbReference type="NCBI Taxonomy" id="83332"/>
    <lineage>
        <taxon>Bacteria</taxon>
        <taxon>Bacillati</taxon>
        <taxon>Actinomycetota</taxon>
        <taxon>Actinomycetes</taxon>
        <taxon>Mycobacteriales</taxon>
        <taxon>Mycobacteriaceae</taxon>
        <taxon>Mycobacterium</taxon>
        <taxon>Mycobacterium tuberculosis complex</taxon>
    </lineage>
</organism>
<name>PKNJ_MYCTU</name>
<protein>
    <recommendedName>
        <fullName>Serine/threonine-protein kinase PknJ</fullName>
        <ecNumber>2.7.11.1</ecNumber>
    </recommendedName>
</protein>
<reference key="1">
    <citation type="journal article" date="1998" name="Nature">
        <title>Deciphering the biology of Mycobacterium tuberculosis from the complete genome sequence.</title>
        <authorList>
            <person name="Cole S.T."/>
            <person name="Brosch R."/>
            <person name="Parkhill J."/>
            <person name="Garnier T."/>
            <person name="Churcher C.M."/>
            <person name="Harris D.E."/>
            <person name="Gordon S.V."/>
            <person name="Eiglmeier K."/>
            <person name="Gas S."/>
            <person name="Barry C.E. III"/>
            <person name="Tekaia F."/>
            <person name="Badcock K."/>
            <person name="Basham D."/>
            <person name="Brown D."/>
            <person name="Chillingworth T."/>
            <person name="Connor R."/>
            <person name="Davies R.M."/>
            <person name="Devlin K."/>
            <person name="Feltwell T."/>
            <person name="Gentles S."/>
            <person name="Hamlin N."/>
            <person name="Holroyd S."/>
            <person name="Hornsby T."/>
            <person name="Jagels K."/>
            <person name="Krogh A."/>
            <person name="McLean J."/>
            <person name="Moule S."/>
            <person name="Murphy L.D."/>
            <person name="Oliver S."/>
            <person name="Osborne J."/>
            <person name="Quail M.A."/>
            <person name="Rajandream M.A."/>
            <person name="Rogers J."/>
            <person name="Rutter S."/>
            <person name="Seeger K."/>
            <person name="Skelton S."/>
            <person name="Squares S."/>
            <person name="Squares R."/>
            <person name="Sulston J.E."/>
            <person name="Taylor K."/>
            <person name="Whitehead S."/>
            <person name="Barrell B.G."/>
        </authorList>
    </citation>
    <scope>NUCLEOTIDE SEQUENCE [LARGE SCALE GENOMIC DNA]</scope>
    <source>
        <strain>ATCC 25618 / H37Rv</strain>
    </source>
</reference>
<reference key="2">
    <citation type="journal article" date="2010" name="Microbiology">
        <title>Functional characterization of the Mycobacterium tuberculosis serine/threonine kinase PknJ.</title>
        <authorList>
            <person name="Jang J."/>
            <person name="Stella A."/>
            <person name="Boudou F."/>
            <person name="Levillain F."/>
            <person name="Darthuy E."/>
            <person name="Vaubourgeix J."/>
            <person name="Wang C."/>
            <person name="Bardou F."/>
            <person name="Puzo G."/>
            <person name="Gilleron M."/>
            <person name="Burlet-Schiltz O."/>
            <person name="Monsarrat B."/>
            <person name="Brodin P."/>
            <person name="Gicquel B."/>
            <person name="Neyrolles O."/>
        </authorList>
    </citation>
    <scope>FUNCTION</scope>
    <scope>CATALYTIC ACTIVITY</scope>
    <scope>SUBUNIT</scope>
    <scope>SUBCELLULAR LOCATION</scope>
    <scope>TOPOLOGY</scope>
    <scope>PHOSPHORYLATION AT THR-168; THR-171 AND THR-173</scope>
    <scope>MUTAGENESIS OF THR-168; THR-171 AND THR-173</scope>
    <scope>IDENTIFICATION BY MASS SPECTROMETRY</scope>
    <source>
        <strain>ATCC 25618 / H37Rv</strain>
    </source>
</reference>
<reference key="3">
    <citation type="journal article" date="2010" name="PLoS ONE">
        <title>Understanding the role of PknJ in Mycobacterium tuberculosis: biochemical characterization and identification of novel substrate pyruvate kinase A.</title>
        <authorList>
            <person name="Arora G."/>
            <person name="Sajid A."/>
            <person name="Gupta M."/>
            <person name="Bhaduri A."/>
            <person name="Kumar P."/>
            <person name="Basu-Modak S."/>
            <person name="Singh Y."/>
        </authorList>
    </citation>
    <scope>FUNCTION</scope>
    <scope>CATALYTIC ACTIVITY</scope>
    <scope>ACTIVITY REGULATION</scope>
    <scope>SUBUNIT</scope>
    <scope>PHOSPHORYLATION AT THR-179</scope>
    <scope>DEPHOSPHORYLATION</scope>
    <scope>MUTAGENESIS OF LYS-43; HIS-78; THR-168; SER-172 AND THR-179</scope>
    <source>
        <strain>ATCC 25618 / H37Rv</strain>
    </source>
</reference>
<reference key="4">
    <citation type="journal article" date="2011" name="Mol. Cell. Proteomics">
        <title>Proteogenomic analysis of Mycobacterium tuberculosis by high resolution mass spectrometry.</title>
        <authorList>
            <person name="Kelkar D.S."/>
            <person name="Kumar D."/>
            <person name="Kumar P."/>
            <person name="Balakrishnan L."/>
            <person name="Muthusamy B."/>
            <person name="Yadav A.K."/>
            <person name="Shrivastava P."/>
            <person name="Marimuthu A."/>
            <person name="Anand S."/>
            <person name="Sundaram H."/>
            <person name="Kingsbury R."/>
            <person name="Harsha H.C."/>
            <person name="Nair B."/>
            <person name="Prasad T.S."/>
            <person name="Chauhan D.S."/>
            <person name="Katoch K."/>
            <person name="Katoch V.M."/>
            <person name="Kumar P."/>
            <person name="Chaerkady R."/>
            <person name="Ramachandran S."/>
            <person name="Dash D."/>
            <person name="Pandey A."/>
        </authorList>
    </citation>
    <scope>IDENTIFICATION BY MASS SPECTROMETRY [LARGE SCALE ANALYSIS]</scope>
    <source>
        <strain>ATCC 25618 / H37Rv</strain>
    </source>
</reference>
<sequence length="589" mass="61595">MAHELSAGSVFAGYRIERMLGAGGMGTVYLARNPDLPRSEALKVLAAELSRDLDFRARFVREADVAAGLDHPNIVAVHQRGQFEGRLWIAMQFVDGGNAEDALRAATMTTARAVYVIGEVAKALDYAHQQGVIHRDIKPANFLLSRAAGGDERVLLSDFGIARALGDTGLTSTGSVLATLAYAAPEVLAGQGFDGRADLYSLGCALFRLLTGEAPFAAGAGAAVAVVAGHLHQPPPTVSDRVPGLSAAMDAVIATAMAKDPMRRFTSAGEFAHAAAAALYGGATDGWVPPSPAPHVISQGAVPGSPWWQHPVGSVTALATPPGHGWPPGLPPLPRRPRRYRRGVAAVAAVMVVAAAAVTAVTMTSHQPRTATPPSAAALSPTSSSTTPPQPPIVTRSRLPGLLPPLDDVKNFVGIQNLVAHEPMLQPQTPNGSINPAECWPAVGGGVPSAYDLGTVIGFYGLTIDEPPTGTAPNQVGQLIVAFRDAATAQRHLADLASIWRRCGGRTVTLFRSEWRRPVELSTSVPEVVDGITTMVLTAQGPVLRVREDHAIAAKNNVLVDVDIMTPDTSRGQQAVIGITNYILAKIPG</sequence>
<gene>
    <name type="primary">pknJ</name>
    <name type="ordered locus">Rv2088</name>
    <name type="ORF">MTCY49.28</name>
</gene>
<proteinExistence type="evidence at protein level"/>
<dbReference type="EC" id="2.7.11.1"/>
<dbReference type="EMBL" id="AL123456">
    <property type="protein sequence ID" value="CCP44863.1"/>
    <property type="molecule type" value="Genomic_DNA"/>
</dbReference>
<dbReference type="PIR" id="C70767">
    <property type="entry name" value="C70767"/>
</dbReference>
<dbReference type="RefSeq" id="NP_216604.1">
    <property type="nucleotide sequence ID" value="NC_000962.3"/>
</dbReference>
<dbReference type="RefSeq" id="WP_003410735.1">
    <property type="nucleotide sequence ID" value="NZ_NVQJ01000061.1"/>
</dbReference>
<dbReference type="SMR" id="P9WI67"/>
<dbReference type="FunCoup" id="P9WI67">
    <property type="interactions" value="1"/>
</dbReference>
<dbReference type="STRING" id="83332.Rv2088"/>
<dbReference type="iPTMnet" id="P9WI67"/>
<dbReference type="PaxDb" id="83332-Rv2088"/>
<dbReference type="DNASU" id="888322"/>
<dbReference type="GeneID" id="888322"/>
<dbReference type="KEGG" id="mtu:Rv2088"/>
<dbReference type="KEGG" id="mtv:RVBD_2088"/>
<dbReference type="TubercuList" id="Rv2088"/>
<dbReference type="eggNOG" id="COG0515">
    <property type="taxonomic scope" value="Bacteria"/>
</dbReference>
<dbReference type="InParanoid" id="P9WI67"/>
<dbReference type="OrthoDB" id="5622056at2"/>
<dbReference type="Proteomes" id="UP000001584">
    <property type="component" value="Chromosome"/>
</dbReference>
<dbReference type="GO" id="GO:0005886">
    <property type="term" value="C:plasma membrane"/>
    <property type="evidence" value="ECO:0007669"/>
    <property type="project" value="UniProtKB-SubCell"/>
</dbReference>
<dbReference type="GO" id="GO:0005524">
    <property type="term" value="F:ATP binding"/>
    <property type="evidence" value="ECO:0007669"/>
    <property type="project" value="UniProtKB-KW"/>
</dbReference>
<dbReference type="GO" id="GO:0050897">
    <property type="term" value="F:cobalt ion binding"/>
    <property type="evidence" value="ECO:0000314"/>
    <property type="project" value="MTBBASE"/>
</dbReference>
<dbReference type="GO" id="GO:0016151">
    <property type="term" value="F:nickel cation binding"/>
    <property type="evidence" value="ECO:0000314"/>
    <property type="project" value="MTBBASE"/>
</dbReference>
<dbReference type="GO" id="GO:0106310">
    <property type="term" value="F:protein serine kinase activity"/>
    <property type="evidence" value="ECO:0007669"/>
    <property type="project" value="RHEA"/>
</dbReference>
<dbReference type="GO" id="GO:0004674">
    <property type="term" value="F:protein serine/threonine kinase activity"/>
    <property type="evidence" value="ECO:0000314"/>
    <property type="project" value="UniProtKB"/>
</dbReference>
<dbReference type="GO" id="GO:0006110">
    <property type="term" value="P:regulation of glycolytic process"/>
    <property type="evidence" value="ECO:0000314"/>
    <property type="project" value="MTBBASE"/>
</dbReference>
<dbReference type="CDD" id="cd14014">
    <property type="entry name" value="STKc_PknB_like"/>
    <property type="match status" value="1"/>
</dbReference>
<dbReference type="FunFam" id="1.10.510.10:FF:000021">
    <property type="entry name" value="Serine/threonine protein kinase"/>
    <property type="match status" value="1"/>
</dbReference>
<dbReference type="Gene3D" id="3.30.200.20">
    <property type="entry name" value="Phosphorylase Kinase, domain 1"/>
    <property type="match status" value="1"/>
</dbReference>
<dbReference type="Gene3D" id="3.40.1000.70">
    <property type="entry name" value="PknH-like extracellular domain"/>
    <property type="match status" value="1"/>
</dbReference>
<dbReference type="Gene3D" id="1.10.510.10">
    <property type="entry name" value="Transferase(Phosphotransferase) domain 1"/>
    <property type="match status" value="1"/>
</dbReference>
<dbReference type="InterPro" id="IPR011009">
    <property type="entry name" value="Kinase-like_dom_sf"/>
</dbReference>
<dbReference type="InterPro" id="IPR026954">
    <property type="entry name" value="PknH-like_Extracell"/>
</dbReference>
<dbReference type="InterPro" id="IPR038232">
    <property type="entry name" value="PknH-like_Extracell_sf"/>
</dbReference>
<dbReference type="InterPro" id="IPR000719">
    <property type="entry name" value="Prot_kinase_dom"/>
</dbReference>
<dbReference type="InterPro" id="IPR008271">
    <property type="entry name" value="Ser/Thr_kinase_AS"/>
</dbReference>
<dbReference type="PANTHER" id="PTHR43289">
    <property type="entry name" value="MITOGEN-ACTIVATED PROTEIN KINASE KINASE KINASE 20-RELATED"/>
    <property type="match status" value="1"/>
</dbReference>
<dbReference type="PANTHER" id="PTHR43289:SF6">
    <property type="entry name" value="SERINE_THREONINE-PROTEIN KINASE NEKL-3"/>
    <property type="match status" value="1"/>
</dbReference>
<dbReference type="Pfam" id="PF00069">
    <property type="entry name" value="Pkinase"/>
    <property type="match status" value="1"/>
</dbReference>
<dbReference type="Pfam" id="PF14032">
    <property type="entry name" value="PknH_C"/>
    <property type="match status" value="1"/>
</dbReference>
<dbReference type="SMART" id="SM00220">
    <property type="entry name" value="S_TKc"/>
    <property type="match status" value="1"/>
</dbReference>
<dbReference type="SUPFAM" id="SSF56112">
    <property type="entry name" value="Protein kinase-like (PK-like)"/>
    <property type="match status" value="1"/>
</dbReference>
<dbReference type="PROSITE" id="PS50011">
    <property type="entry name" value="PROTEIN_KINASE_DOM"/>
    <property type="match status" value="1"/>
</dbReference>
<dbReference type="PROSITE" id="PS00108">
    <property type="entry name" value="PROTEIN_KINASE_ST"/>
    <property type="match status" value="1"/>
</dbReference>
<keyword id="KW-0067">ATP-binding</keyword>
<keyword id="KW-1003">Cell membrane</keyword>
<keyword id="KW-0418">Kinase</keyword>
<keyword id="KW-0472">Membrane</keyword>
<keyword id="KW-0547">Nucleotide-binding</keyword>
<keyword id="KW-0597">Phosphoprotein</keyword>
<keyword id="KW-1185">Reference proteome</keyword>
<keyword id="KW-0723">Serine/threonine-protein kinase</keyword>
<keyword id="KW-0808">Transferase</keyword>
<keyword id="KW-0812">Transmembrane</keyword>
<keyword id="KW-1133">Transmembrane helix</keyword>
<comment type="function">
    <text evidence="5 6">In vitro, phosphorylates various substrates such as EmbR, PepE, MmaA4, Pyk, LldD and GroEL2.</text>
</comment>
<comment type="catalytic activity">
    <reaction evidence="5 6">
        <text>L-seryl-[protein] + ATP = O-phospho-L-seryl-[protein] + ADP + H(+)</text>
        <dbReference type="Rhea" id="RHEA:17989"/>
        <dbReference type="Rhea" id="RHEA-COMP:9863"/>
        <dbReference type="Rhea" id="RHEA-COMP:11604"/>
        <dbReference type="ChEBI" id="CHEBI:15378"/>
        <dbReference type="ChEBI" id="CHEBI:29999"/>
        <dbReference type="ChEBI" id="CHEBI:30616"/>
        <dbReference type="ChEBI" id="CHEBI:83421"/>
        <dbReference type="ChEBI" id="CHEBI:456216"/>
        <dbReference type="EC" id="2.7.11.1"/>
    </reaction>
</comment>
<comment type="catalytic activity">
    <reaction evidence="5 6">
        <text>L-threonyl-[protein] + ATP = O-phospho-L-threonyl-[protein] + ADP + H(+)</text>
        <dbReference type="Rhea" id="RHEA:46608"/>
        <dbReference type="Rhea" id="RHEA-COMP:11060"/>
        <dbReference type="Rhea" id="RHEA-COMP:11605"/>
        <dbReference type="ChEBI" id="CHEBI:15378"/>
        <dbReference type="ChEBI" id="CHEBI:30013"/>
        <dbReference type="ChEBI" id="CHEBI:30616"/>
        <dbReference type="ChEBI" id="CHEBI:61977"/>
        <dbReference type="ChEBI" id="CHEBI:456216"/>
        <dbReference type="EC" id="2.7.11.1"/>
    </reaction>
</comment>
<comment type="activity regulation">
    <text evidence="6">Activated by certain divalent metal cations, such as cobalt, manganese, nickel or magnesium. Zinc or iron ions do not affect activity.</text>
</comment>
<comment type="subunit">
    <text evidence="5 6">Homodimer.</text>
</comment>
<comment type="subcellular location">
    <subcellularLocation>
        <location evidence="5">Cell membrane</location>
        <topology evidence="5">Single-pass membrane protein</topology>
    </subcellularLocation>
</comment>
<comment type="PTM">
    <text evidence="5 6">Autophosphorylated. Dephosphorylated by PstP.</text>
</comment>
<comment type="similarity">
    <text evidence="2">Belongs to the protein kinase superfamily. Ser/Thr protein kinase family.</text>
</comment>
<accession>P9WI67</accession>
<accession>L0T8S8</accession>
<accession>P65732</accession>
<accession>Q10697</accession>
<evidence type="ECO:0000255" key="1"/>
<evidence type="ECO:0000255" key="2">
    <source>
        <dbReference type="PROSITE-ProRule" id="PRU00159"/>
    </source>
</evidence>
<evidence type="ECO:0000255" key="3">
    <source>
        <dbReference type="PROSITE-ProRule" id="PRU10027"/>
    </source>
</evidence>
<evidence type="ECO:0000256" key="4">
    <source>
        <dbReference type="SAM" id="MobiDB-lite"/>
    </source>
</evidence>
<evidence type="ECO:0000269" key="5">
    <source>
    </source>
</evidence>
<evidence type="ECO:0000269" key="6">
    <source>
    </source>
</evidence>
<evidence type="ECO:0000305" key="7">
    <source>
    </source>
</evidence>
<feature type="chain" id="PRO_0000171222" description="Serine/threonine-protein kinase PknJ">
    <location>
        <begin position="1"/>
        <end position="589"/>
    </location>
</feature>
<feature type="topological domain" description="Cytoplasmic" evidence="1">
    <location>
        <begin position="1"/>
        <end position="342"/>
    </location>
</feature>
<feature type="transmembrane region" description="Helical" evidence="1">
    <location>
        <begin position="343"/>
        <end position="363"/>
    </location>
</feature>
<feature type="topological domain" description="Extracellular" evidence="1">
    <location>
        <begin position="364"/>
        <end position="589"/>
    </location>
</feature>
<feature type="domain" description="Protein kinase" evidence="2">
    <location>
        <begin position="14"/>
        <end position="276"/>
    </location>
</feature>
<feature type="region of interest" description="Disordered" evidence="4">
    <location>
        <begin position="365"/>
        <end position="400"/>
    </location>
</feature>
<feature type="compositionally biased region" description="Low complexity" evidence="4">
    <location>
        <begin position="365"/>
        <end position="387"/>
    </location>
</feature>
<feature type="active site" description="Proton acceptor" evidence="2 3">
    <location>
        <position position="136"/>
    </location>
</feature>
<feature type="binding site" evidence="2">
    <location>
        <begin position="20"/>
        <end position="28"/>
    </location>
    <ligand>
        <name>ATP</name>
        <dbReference type="ChEBI" id="CHEBI:30616"/>
    </ligand>
</feature>
<feature type="binding site" evidence="2">
    <location>
        <position position="43"/>
    </location>
    <ligand>
        <name>ATP</name>
        <dbReference type="ChEBI" id="CHEBI:30616"/>
    </ligand>
</feature>
<feature type="modified residue" description="Phosphothreonine; by autocatalysis" evidence="5">
    <location>
        <position position="168"/>
    </location>
</feature>
<feature type="modified residue" description="Phosphothreonine; by autocatalysis" evidence="5">
    <location>
        <position position="171"/>
    </location>
</feature>
<feature type="modified residue" description="Phosphothreonine; by autocatalysis" evidence="5">
    <location>
        <position position="173"/>
    </location>
</feature>
<feature type="modified residue" description="Phosphothreonine; by autocatalysis" evidence="7">
    <location>
        <position position="179"/>
    </location>
</feature>
<feature type="mutagenesis site" description="Lack of kinase activity." evidence="6">
    <original>K</original>
    <variation>A</variation>
    <location>
        <position position="43"/>
    </location>
</feature>
<feature type="mutagenesis site" description="Lack of phosphorylation." evidence="6">
    <original>H</original>
    <variation>A</variation>
    <location>
        <position position="78"/>
    </location>
</feature>
<feature type="mutagenesis site" description="Does not affect phosphorylation. Lack of phosphorylation; when associated with A-171 and A-173." evidence="5 6">
    <original>T</original>
    <variation>A</variation>
    <location>
        <position position="168"/>
    </location>
</feature>
<feature type="mutagenesis site" description="Lack of phosphorylation; when associated with A-168 and A-173." evidence="5">
    <original>T</original>
    <variation>A</variation>
    <location>
        <position position="171"/>
    </location>
</feature>
<feature type="mutagenesis site" description="Does not affect phosphorylation." evidence="6">
    <original>S</original>
    <variation>A</variation>
    <location>
        <position position="172"/>
    </location>
</feature>
<feature type="mutagenesis site" description="Lack of phosphorylation; when associated with A-168 and A-171." evidence="5">
    <original>T</original>
    <variation>A</variation>
    <location>
        <position position="173"/>
    </location>
</feature>
<feature type="mutagenesis site" description="Decreases phosphorylation." evidence="6">
    <original>T</original>
    <variation>A</variation>
    <location>
        <position position="179"/>
    </location>
</feature>